<evidence type="ECO:0000255" key="1">
    <source>
        <dbReference type="HAMAP-Rule" id="MF_01341"/>
    </source>
</evidence>
<evidence type="ECO:0000256" key="2">
    <source>
        <dbReference type="SAM" id="MobiDB-lite"/>
    </source>
</evidence>
<evidence type="ECO:0000305" key="3"/>
<protein>
    <recommendedName>
        <fullName evidence="1">Large ribosomal subunit protein uL15</fullName>
    </recommendedName>
    <alternativeName>
        <fullName evidence="3">50S ribosomal protein L15</fullName>
    </alternativeName>
</protein>
<sequence>MIRSKRKINKLRGSRSNGGGCTKKRRGAGNKGGRGNAGASKQHWTWTAKFDPDHYGKHGFKRPQKMIKKVNPVNLSYLEEQADNLIESGKASKDGDSIVIDVTELGYDKVLAKGKITKSFIISAPQFSASAIEKIEEMGGEAIEL</sequence>
<gene>
    <name evidence="1" type="primary">rpl15</name>
    <name type="ordered locus">Msm_0739</name>
</gene>
<accession>A5UL66</accession>
<keyword id="KW-0687">Ribonucleoprotein</keyword>
<keyword id="KW-0689">Ribosomal protein</keyword>
<keyword id="KW-0694">RNA-binding</keyword>
<keyword id="KW-0699">rRNA-binding</keyword>
<reference key="1">
    <citation type="journal article" date="2007" name="Proc. Natl. Acad. Sci. U.S.A.">
        <title>Genomic and metabolic adaptations of Methanobrevibacter smithii to the human gut.</title>
        <authorList>
            <person name="Samuel B.S."/>
            <person name="Hansen E.E."/>
            <person name="Manchester J.K."/>
            <person name="Coutinho P.M."/>
            <person name="Henrissat B."/>
            <person name="Fulton R."/>
            <person name="Latreille P."/>
            <person name="Kim K."/>
            <person name="Wilson R.K."/>
            <person name="Gordon J.I."/>
        </authorList>
    </citation>
    <scope>NUCLEOTIDE SEQUENCE [LARGE SCALE GENOMIC DNA]</scope>
    <source>
        <strain>ATCC 35061 / DSM 861 / OCM 144 / PS</strain>
    </source>
</reference>
<dbReference type="EMBL" id="CP000678">
    <property type="protein sequence ID" value="ABQ86944.1"/>
    <property type="molecule type" value="Genomic_DNA"/>
</dbReference>
<dbReference type="RefSeq" id="WP_011954075.1">
    <property type="nucleotide sequence ID" value="NZ_CP117965.1"/>
</dbReference>
<dbReference type="SMR" id="A5UL66"/>
<dbReference type="STRING" id="420247.Msm_0739"/>
<dbReference type="EnsemblBacteria" id="ABQ86944">
    <property type="protein sequence ID" value="ABQ86944"/>
    <property type="gene ID" value="Msm_0739"/>
</dbReference>
<dbReference type="KEGG" id="msi:Msm_0739"/>
<dbReference type="PATRIC" id="fig|420247.28.peg.736"/>
<dbReference type="eggNOG" id="arCOG00779">
    <property type="taxonomic scope" value="Archaea"/>
</dbReference>
<dbReference type="HOGENOM" id="CLU_109163_0_0_2"/>
<dbReference type="Proteomes" id="UP000001992">
    <property type="component" value="Chromosome"/>
</dbReference>
<dbReference type="GO" id="GO:0022625">
    <property type="term" value="C:cytosolic large ribosomal subunit"/>
    <property type="evidence" value="ECO:0007669"/>
    <property type="project" value="TreeGrafter"/>
</dbReference>
<dbReference type="GO" id="GO:0019843">
    <property type="term" value="F:rRNA binding"/>
    <property type="evidence" value="ECO:0007669"/>
    <property type="project" value="UniProtKB-UniRule"/>
</dbReference>
<dbReference type="GO" id="GO:0003735">
    <property type="term" value="F:structural constituent of ribosome"/>
    <property type="evidence" value="ECO:0007669"/>
    <property type="project" value="InterPro"/>
</dbReference>
<dbReference type="GO" id="GO:0006412">
    <property type="term" value="P:translation"/>
    <property type="evidence" value="ECO:0007669"/>
    <property type="project" value="UniProtKB-UniRule"/>
</dbReference>
<dbReference type="Gene3D" id="3.100.10.10">
    <property type="match status" value="1"/>
</dbReference>
<dbReference type="Gene3D" id="4.10.990.10">
    <property type="match status" value="1"/>
</dbReference>
<dbReference type="HAMAP" id="MF_01341">
    <property type="entry name" value="Ribosomal_uL15"/>
    <property type="match status" value="1"/>
</dbReference>
<dbReference type="InterPro" id="IPR027386">
    <property type="entry name" value="Rbsml_uL15_N"/>
</dbReference>
<dbReference type="InterPro" id="IPR030878">
    <property type="entry name" value="Ribosomal_uL15"/>
</dbReference>
<dbReference type="InterPro" id="IPR021131">
    <property type="entry name" value="Ribosomal_uL15/eL18"/>
</dbReference>
<dbReference type="InterPro" id="IPR036227">
    <property type="entry name" value="Ribosomal_uL15/eL18_sf"/>
</dbReference>
<dbReference type="InterPro" id="IPR001196">
    <property type="entry name" value="Ribosomal_uL15_CS"/>
</dbReference>
<dbReference type="PANTHER" id="PTHR11721">
    <property type="entry name" value="60S RIBOSOMAL PROTEIN L27A"/>
    <property type="match status" value="1"/>
</dbReference>
<dbReference type="PANTHER" id="PTHR11721:SF3">
    <property type="entry name" value="LARGE RIBOSOMAL SUBUNIT PROTEIN UL15"/>
    <property type="match status" value="1"/>
</dbReference>
<dbReference type="Pfam" id="PF00828">
    <property type="entry name" value="Ribosomal_L27A"/>
    <property type="match status" value="1"/>
</dbReference>
<dbReference type="SUPFAM" id="SSF52080">
    <property type="entry name" value="Ribosomal proteins L15p and L18e"/>
    <property type="match status" value="1"/>
</dbReference>
<dbReference type="PROSITE" id="PS00475">
    <property type="entry name" value="RIBOSOMAL_L15"/>
    <property type="match status" value="1"/>
</dbReference>
<feature type="chain" id="PRO_1000054494" description="Large ribosomal subunit protein uL15">
    <location>
        <begin position="1"/>
        <end position="145"/>
    </location>
</feature>
<feature type="region of interest" description="Disordered" evidence="2">
    <location>
        <begin position="1"/>
        <end position="44"/>
    </location>
</feature>
<feature type="compositionally biased region" description="Basic residues" evidence="2">
    <location>
        <begin position="1"/>
        <end position="13"/>
    </location>
</feature>
<comment type="function">
    <text evidence="1">Binds to the 23S rRNA.</text>
</comment>
<comment type="subunit">
    <text evidence="1">Part of the 50S ribosomal subunit.</text>
</comment>
<comment type="similarity">
    <text evidence="1">Belongs to the universal ribosomal protein uL15 family.</text>
</comment>
<proteinExistence type="inferred from homology"/>
<organism>
    <name type="scientific">Methanobrevibacter smithii (strain ATCC 35061 / DSM 861 / OCM 144 / PS)</name>
    <dbReference type="NCBI Taxonomy" id="420247"/>
    <lineage>
        <taxon>Archaea</taxon>
        <taxon>Methanobacteriati</taxon>
        <taxon>Methanobacteriota</taxon>
        <taxon>Methanomada group</taxon>
        <taxon>Methanobacteria</taxon>
        <taxon>Methanobacteriales</taxon>
        <taxon>Methanobacteriaceae</taxon>
        <taxon>Methanobrevibacter</taxon>
    </lineage>
</organism>
<name>RL15_METS3</name>